<keyword id="KW-0963">Cytoplasm</keyword>
<keyword id="KW-0539">Nucleus</keyword>
<keyword id="KW-0653">Protein transport</keyword>
<keyword id="KW-1185">Reference proteome</keyword>
<keyword id="KW-0813">Transport</keyword>
<feature type="chain" id="PRO_0000249707" description="Protein BCP1">
    <location>
        <begin position="1"/>
        <end position="302"/>
    </location>
</feature>
<feature type="region of interest" description="Disordered" evidence="3">
    <location>
        <begin position="1"/>
        <end position="46"/>
    </location>
</feature>
<feature type="region of interest" description="Disordered" evidence="3">
    <location>
        <begin position="211"/>
        <end position="232"/>
    </location>
</feature>
<feature type="compositionally biased region" description="Basic and acidic residues" evidence="3">
    <location>
        <begin position="1"/>
        <end position="13"/>
    </location>
</feature>
<feature type="compositionally biased region" description="Acidic residues" evidence="3">
    <location>
        <begin position="16"/>
        <end position="46"/>
    </location>
</feature>
<protein>
    <recommendedName>
        <fullName>Protein BCP1</fullName>
    </recommendedName>
</protein>
<reference key="1">
    <citation type="journal article" date="2004" name="Nature">
        <title>Genome evolution in yeasts.</title>
        <authorList>
            <person name="Dujon B."/>
            <person name="Sherman D."/>
            <person name="Fischer G."/>
            <person name="Durrens P."/>
            <person name="Casaregola S."/>
            <person name="Lafontaine I."/>
            <person name="de Montigny J."/>
            <person name="Marck C."/>
            <person name="Neuveglise C."/>
            <person name="Talla E."/>
            <person name="Goffard N."/>
            <person name="Frangeul L."/>
            <person name="Aigle M."/>
            <person name="Anthouard V."/>
            <person name="Babour A."/>
            <person name="Barbe V."/>
            <person name="Barnay S."/>
            <person name="Blanchin S."/>
            <person name="Beckerich J.-M."/>
            <person name="Beyne E."/>
            <person name="Bleykasten C."/>
            <person name="Boisrame A."/>
            <person name="Boyer J."/>
            <person name="Cattolico L."/>
            <person name="Confanioleri F."/>
            <person name="de Daruvar A."/>
            <person name="Despons L."/>
            <person name="Fabre E."/>
            <person name="Fairhead C."/>
            <person name="Ferry-Dumazet H."/>
            <person name="Groppi A."/>
            <person name="Hantraye F."/>
            <person name="Hennequin C."/>
            <person name="Jauniaux N."/>
            <person name="Joyet P."/>
            <person name="Kachouri R."/>
            <person name="Kerrest A."/>
            <person name="Koszul R."/>
            <person name="Lemaire M."/>
            <person name="Lesur I."/>
            <person name="Ma L."/>
            <person name="Muller H."/>
            <person name="Nicaud J.-M."/>
            <person name="Nikolski M."/>
            <person name="Oztas S."/>
            <person name="Ozier-Kalogeropoulos O."/>
            <person name="Pellenz S."/>
            <person name="Potier S."/>
            <person name="Richard G.-F."/>
            <person name="Straub M.-L."/>
            <person name="Suleau A."/>
            <person name="Swennen D."/>
            <person name="Tekaia F."/>
            <person name="Wesolowski-Louvel M."/>
            <person name="Westhof E."/>
            <person name="Wirth B."/>
            <person name="Zeniou-Meyer M."/>
            <person name="Zivanovic Y."/>
            <person name="Bolotin-Fukuhara M."/>
            <person name="Thierry A."/>
            <person name="Bouchier C."/>
            <person name="Caudron B."/>
            <person name="Scarpelli C."/>
            <person name="Gaillardin C."/>
            <person name="Weissenbach J."/>
            <person name="Wincker P."/>
            <person name="Souciet J.-L."/>
        </authorList>
    </citation>
    <scope>NUCLEOTIDE SEQUENCE [LARGE SCALE GENOMIC DNA]</scope>
    <source>
        <strain>CLIB 122 / E 150</strain>
    </source>
</reference>
<proteinExistence type="inferred from homology"/>
<organism>
    <name type="scientific">Yarrowia lipolytica (strain CLIB 122 / E 150)</name>
    <name type="common">Yeast</name>
    <name type="synonym">Candida lipolytica</name>
    <dbReference type="NCBI Taxonomy" id="284591"/>
    <lineage>
        <taxon>Eukaryota</taxon>
        <taxon>Fungi</taxon>
        <taxon>Dikarya</taxon>
        <taxon>Ascomycota</taxon>
        <taxon>Saccharomycotina</taxon>
        <taxon>Dipodascomycetes</taxon>
        <taxon>Dipodascales</taxon>
        <taxon>Dipodascales incertae sedis</taxon>
        <taxon>Yarrowia</taxon>
    </lineage>
</organism>
<comment type="function">
    <text evidence="1">Involved in nuclear export, actin cytoskeleton organization and vesicular transport.</text>
</comment>
<comment type="subcellular location">
    <subcellularLocation>
        <location evidence="2">Cytoplasm</location>
    </subcellularLocation>
    <subcellularLocation>
        <location evidence="2">Nucleus</location>
    </subcellularLocation>
</comment>
<comment type="similarity">
    <text evidence="4">Belongs to the BCP1 family.</text>
</comment>
<sequence length="302" mass="34503">MPKRAAEDQKHPAETSSEDEYDESYLEEDSYAPDSPDDPTMEDDEEVPDTIDVDFEYFDFNKDIDYHAIGNLLRQLLDSDSTSFNLSELSDMILEQESCGTTIKTDGKESDPFAILTVINMSKHKDNKKGVIAALIDYFVARTQDLPELHKQMRKLLGPSSTSKVGLIISERLINMPVQVVPPMYKMLLDETKDQDFDYFLVLSKTFTEAETSVDEEDERPSKKNKKGPGYKPETYYFHPEDEVIQEKSTQYGSYAFKKASQEADSKRAFQEYGIFPQGHLMLFKAKDLEAIVAKMEVEFAP</sequence>
<accession>Q6C7K5</accession>
<evidence type="ECO:0000250" key="1"/>
<evidence type="ECO:0000250" key="2">
    <source>
        <dbReference type="UniProtKB" id="Q06338"/>
    </source>
</evidence>
<evidence type="ECO:0000256" key="3">
    <source>
        <dbReference type="SAM" id="MobiDB-lite"/>
    </source>
</evidence>
<evidence type="ECO:0000305" key="4"/>
<gene>
    <name type="primary">BCP1</name>
    <name type="ordered locus">YALI0D27324g</name>
</gene>
<name>BCP1_YARLI</name>
<dbReference type="EMBL" id="CR382130">
    <property type="protein sequence ID" value="CAG81563.1"/>
    <property type="molecule type" value="Genomic_DNA"/>
</dbReference>
<dbReference type="RefSeq" id="XP_503357.1">
    <property type="nucleotide sequence ID" value="XM_503357.1"/>
</dbReference>
<dbReference type="SMR" id="Q6C7K5"/>
<dbReference type="FunCoup" id="Q6C7K5">
    <property type="interactions" value="1030"/>
</dbReference>
<dbReference type="STRING" id="284591.Q6C7K5"/>
<dbReference type="EnsemblFungi" id="CAG81563">
    <property type="protein sequence ID" value="CAG81563"/>
    <property type="gene ID" value="YALI0_D27324g"/>
</dbReference>
<dbReference type="KEGG" id="yli:2910303"/>
<dbReference type="VEuPathDB" id="FungiDB:YALI0_D27324g"/>
<dbReference type="HOGENOM" id="CLU_068770_2_0_1"/>
<dbReference type="InParanoid" id="Q6C7K5"/>
<dbReference type="OMA" id="VKFYRKE"/>
<dbReference type="OrthoDB" id="18916at4891"/>
<dbReference type="Proteomes" id="UP000001300">
    <property type="component" value="Chromosome D"/>
</dbReference>
<dbReference type="GO" id="GO:0005737">
    <property type="term" value="C:cytoplasm"/>
    <property type="evidence" value="ECO:0007669"/>
    <property type="project" value="UniProtKB-SubCell"/>
</dbReference>
<dbReference type="GO" id="GO:0005634">
    <property type="term" value="C:nucleus"/>
    <property type="evidence" value="ECO:0000318"/>
    <property type="project" value="GO_Central"/>
</dbReference>
<dbReference type="GO" id="GO:0015031">
    <property type="term" value="P:protein transport"/>
    <property type="evidence" value="ECO:0007669"/>
    <property type="project" value="UniProtKB-KW"/>
</dbReference>
<dbReference type="InterPro" id="IPR025602">
    <property type="entry name" value="BCP1_family"/>
</dbReference>
<dbReference type="PANTHER" id="PTHR13261">
    <property type="entry name" value="BRCA2 AND CDKN1A INTERACTING PROTEIN"/>
    <property type="match status" value="1"/>
</dbReference>
<dbReference type="PANTHER" id="PTHR13261:SF0">
    <property type="entry name" value="BRCA2 AND CDKN1A-INTERACTING PROTEIN"/>
    <property type="match status" value="1"/>
</dbReference>
<dbReference type="Pfam" id="PF13862">
    <property type="entry name" value="BCCIP"/>
    <property type="match status" value="1"/>
</dbReference>
<dbReference type="PIRSF" id="PIRSF028983">
    <property type="entry name" value="BCP1"/>
    <property type="match status" value="1"/>
</dbReference>